<feature type="chain" id="PRO_0000267504" description="Type III pantothenate kinase">
    <location>
        <begin position="1"/>
        <end position="209"/>
    </location>
</feature>
<feature type="active site" description="Proton acceptor" evidence="1">
    <location>
        <position position="74"/>
    </location>
</feature>
<feature type="binding site" evidence="1">
    <location>
        <begin position="5"/>
        <end position="12"/>
    </location>
    <ligand>
        <name>ATP</name>
        <dbReference type="ChEBI" id="CHEBI:30616"/>
    </ligand>
</feature>
<feature type="binding site" evidence="1">
    <location>
        <position position="68"/>
    </location>
    <ligand>
        <name>substrate</name>
    </ligand>
</feature>
<feature type="binding site" evidence="1">
    <location>
        <begin position="72"/>
        <end position="75"/>
    </location>
    <ligand>
        <name>substrate</name>
    </ligand>
</feature>
<feature type="binding site" evidence="1">
    <location>
        <position position="89"/>
    </location>
    <ligand>
        <name>K(+)</name>
        <dbReference type="ChEBI" id="CHEBI:29103"/>
    </ligand>
</feature>
<feature type="binding site" evidence="1">
    <location>
        <position position="92"/>
    </location>
    <ligand>
        <name>ATP</name>
        <dbReference type="ChEBI" id="CHEBI:30616"/>
    </ligand>
</feature>
<feature type="binding site" evidence="1">
    <location>
        <position position="144"/>
    </location>
    <ligand>
        <name>substrate</name>
    </ligand>
</feature>
<feature type="strand" evidence="2">
    <location>
        <begin position="3"/>
        <end position="6"/>
    </location>
</feature>
<feature type="strand" evidence="2">
    <location>
        <begin position="8"/>
        <end position="14"/>
    </location>
</feature>
<feature type="strand" evidence="2">
    <location>
        <begin position="19"/>
        <end position="23"/>
    </location>
</feature>
<feature type="helix" evidence="2">
    <location>
        <begin position="24"/>
        <end position="29"/>
    </location>
</feature>
<feature type="strand" evidence="2">
    <location>
        <begin position="37"/>
        <end position="40"/>
    </location>
</feature>
<feature type="helix" evidence="2">
    <location>
        <begin position="43"/>
        <end position="45"/>
    </location>
</feature>
<feature type="helix" evidence="2">
    <location>
        <begin position="46"/>
        <end position="51"/>
    </location>
</feature>
<feature type="helix" evidence="2">
    <location>
        <begin position="59"/>
        <end position="61"/>
    </location>
</feature>
<feature type="helix" evidence="2">
    <location>
        <begin position="73"/>
        <end position="79"/>
    </location>
</feature>
<feature type="strand" evidence="2">
    <location>
        <begin position="83"/>
        <end position="100"/>
    </location>
</feature>
<feature type="strand" evidence="2">
    <location>
        <begin position="107"/>
        <end position="111"/>
    </location>
</feature>
<feature type="helix" evidence="2">
    <location>
        <begin position="113"/>
        <end position="123"/>
    </location>
</feature>
<feature type="strand" evidence="2">
    <location>
        <begin position="137"/>
        <end position="139"/>
    </location>
</feature>
<feature type="helix" evidence="2">
    <location>
        <begin position="144"/>
        <end position="163"/>
    </location>
</feature>
<feature type="turn" evidence="2">
    <location>
        <begin position="164"/>
        <end position="166"/>
    </location>
</feature>
<feature type="strand" evidence="2">
    <location>
        <begin position="169"/>
        <end position="173"/>
    </location>
</feature>
<feature type="helix" evidence="2">
    <location>
        <begin position="176"/>
        <end position="180"/>
    </location>
</feature>
<feature type="strand" evidence="2">
    <location>
        <begin position="184"/>
        <end position="188"/>
    </location>
</feature>
<feature type="helix" evidence="2">
    <location>
        <begin position="192"/>
        <end position="203"/>
    </location>
</feature>
<feature type="helix" evidence="2">
    <location>
        <begin position="205"/>
        <end position="207"/>
    </location>
</feature>
<keyword id="KW-0002">3D-structure</keyword>
<keyword id="KW-0067">ATP-binding</keyword>
<keyword id="KW-0173">Coenzyme A biosynthesis</keyword>
<keyword id="KW-0963">Cytoplasm</keyword>
<keyword id="KW-0418">Kinase</keyword>
<keyword id="KW-0479">Metal-binding</keyword>
<keyword id="KW-0547">Nucleotide-binding</keyword>
<keyword id="KW-0630">Potassium</keyword>
<keyword id="KW-1185">Reference proteome</keyword>
<keyword id="KW-0808">Transferase</keyword>
<sequence length="209" mass="23936">MLLCDIGNSNANFLDDNKYFTLNIDQFLEFKNEQKIFYINVNEHLKEHLKNQKNFINLEPYFLFDTIYQGLGIDRIAACYTIEDGVVVDAGSAITIDIISNSIHLGGFILPGIANYKKIYSHISPRLKSEFNTQVSLDAFPQKTMDALSYGVFKGIYLLIKDAAQNKKLYFTGGDGQFLANYFDHAIYDKLLIFRGMKKIIKENPNLLY</sequence>
<protein>
    <recommendedName>
        <fullName evidence="1">Type III pantothenate kinase</fullName>
        <ecNumber evidence="1">2.7.1.33</ecNumber>
    </recommendedName>
    <alternativeName>
        <fullName evidence="1">PanK-III</fullName>
    </alternativeName>
    <alternativeName>
        <fullName evidence="1">Pantothenic acid kinase</fullName>
    </alternativeName>
</protein>
<dbReference type="EC" id="2.7.1.33" evidence="1"/>
<dbReference type="EMBL" id="AL111168">
    <property type="protein sequence ID" value="CAL34544.1"/>
    <property type="molecule type" value="Genomic_DNA"/>
</dbReference>
<dbReference type="PIR" id="H81382">
    <property type="entry name" value="H81382"/>
</dbReference>
<dbReference type="RefSeq" id="WP_002864777.1">
    <property type="nucleotide sequence ID" value="NZ_SZUC01000004.1"/>
</dbReference>
<dbReference type="RefSeq" id="YP_002343831.1">
    <property type="nucleotide sequence ID" value="NC_002163.1"/>
</dbReference>
<dbReference type="PDB" id="2NRH">
    <property type="method" value="X-ray"/>
    <property type="resolution" value="2.30 A"/>
    <property type="chains" value="A/B=2-209"/>
</dbReference>
<dbReference type="PDBsum" id="2NRH"/>
<dbReference type="SMR" id="Q0PBB6"/>
<dbReference type="IntAct" id="Q0PBB6">
    <property type="interactions" value="7"/>
</dbReference>
<dbReference type="STRING" id="192222.Cj0394c"/>
<dbReference type="PaxDb" id="192222-Cj0394c"/>
<dbReference type="EnsemblBacteria" id="CAL34544">
    <property type="protein sequence ID" value="CAL34544"/>
    <property type="gene ID" value="Cj0394c"/>
</dbReference>
<dbReference type="GeneID" id="904717"/>
<dbReference type="KEGG" id="cje:Cj0394c"/>
<dbReference type="PATRIC" id="fig|192222.6.peg.385"/>
<dbReference type="eggNOG" id="COG1521">
    <property type="taxonomic scope" value="Bacteria"/>
</dbReference>
<dbReference type="HOGENOM" id="CLU_1213471_0_0_7"/>
<dbReference type="OrthoDB" id="5347692at2"/>
<dbReference type="UniPathway" id="UPA00241">
    <property type="reaction ID" value="UER00352"/>
</dbReference>
<dbReference type="EvolutionaryTrace" id="Q0PBB6"/>
<dbReference type="Proteomes" id="UP000000799">
    <property type="component" value="Chromosome"/>
</dbReference>
<dbReference type="GO" id="GO:0005737">
    <property type="term" value="C:cytoplasm"/>
    <property type="evidence" value="ECO:0007669"/>
    <property type="project" value="UniProtKB-SubCell"/>
</dbReference>
<dbReference type="GO" id="GO:0005524">
    <property type="term" value="F:ATP binding"/>
    <property type="evidence" value="ECO:0007669"/>
    <property type="project" value="UniProtKB-UniRule"/>
</dbReference>
<dbReference type="GO" id="GO:0046872">
    <property type="term" value="F:metal ion binding"/>
    <property type="evidence" value="ECO:0007669"/>
    <property type="project" value="UniProtKB-KW"/>
</dbReference>
<dbReference type="GO" id="GO:0004594">
    <property type="term" value="F:pantothenate kinase activity"/>
    <property type="evidence" value="ECO:0007669"/>
    <property type="project" value="UniProtKB-UniRule"/>
</dbReference>
<dbReference type="GO" id="GO:0015937">
    <property type="term" value="P:coenzyme A biosynthetic process"/>
    <property type="evidence" value="ECO:0007669"/>
    <property type="project" value="UniProtKB-UniRule"/>
</dbReference>
<dbReference type="CDD" id="cd24015">
    <property type="entry name" value="ASKHA_NBD_PanK-III"/>
    <property type="match status" value="1"/>
</dbReference>
<dbReference type="Gene3D" id="3.30.420.40">
    <property type="match status" value="2"/>
</dbReference>
<dbReference type="HAMAP" id="MF_01274">
    <property type="entry name" value="Pantothen_kinase_3"/>
    <property type="match status" value="1"/>
</dbReference>
<dbReference type="InterPro" id="IPR043129">
    <property type="entry name" value="ATPase_NBD"/>
</dbReference>
<dbReference type="InterPro" id="IPR004619">
    <property type="entry name" value="Type_III_PanK"/>
</dbReference>
<dbReference type="NCBIfam" id="TIGR00671">
    <property type="entry name" value="baf"/>
    <property type="match status" value="1"/>
</dbReference>
<dbReference type="NCBIfam" id="NF009872">
    <property type="entry name" value="PRK13333.1"/>
    <property type="match status" value="1"/>
</dbReference>
<dbReference type="PANTHER" id="PTHR34265">
    <property type="entry name" value="TYPE III PANTOTHENATE KINASE"/>
    <property type="match status" value="1"/>
</dbReference>
<dbReference type="PANTHER" id="PTHR34265:SF1">
    <property type="entry name" value="TYPE III PANTOTHENATE KINASE"/>
    <property type="match status" value="1"/>
</dbReference>
<dbReference type="Pfam" id="PF03309">
    <property type="entry name" value="Pan_kinase"/>
    <property type="match status" value="1"/>
</dbReference>
<dbReference type="SUPFAM" id="SSF53067">
    <property type="entry name" value="Actin-like ATPase domain"/>
    <property type="match status" value="2"/>
</dbReference>
<comment type="function">
    <text evidence="1">Catalyzes the phosphorylation of pantothenate (Pan), the first step in CoA biosynthesis.</text>
</comment>
<comment type="catalytic activity">
    <reaction evidence="1">
        <text>(R)-pantothenate + ATP = (R)-4'-phosphopantothenate + ADP + H(+)</text>
        <dbReference type="Rhea" id="RHEA:16373"/>
        <dbReference type="ChEBI" id="CHEBI:10986"/>
        <dbReference type="ChEBI" id="CHEBI:15378"/>
        <dbReference type="ChEBI" id="CHEBI:29032"/>
        <dbReference type="ChEBI" id="CHEBI:30616"/>
        <dbReference type="ChEBI" id="CHEBI:456216"/>
        <dbReference type="EC" id="2.7.1.33"/>
    </reaction>
</comment>
<comment type="cofactor">
    <cofactor evidence="1">
        <name>NH4(+)</name>
        <dbReference type="ChEBI" id="CHEBI:28938"/>
    </cofactor>
    <cofactor evidence="1">
        <name>K(+)</name>
        <dbReference type="ChEBI" id="CHEBI:29103"/>
    </cofactor>
    <text evidence="1">A monovalent cation. Ammonium or potassium.</text>
</comment>
<comment type="pathway">
    <text evidence="1">Cofactor biosynthesis; coenzyme A biosynthesis; CoA from (R)-pantothenate: step 1/5.</text>
</comment>
<comment type="subunit">
    <text evidence="1">Homodimer.</text>
</comment>
<comment type="subcellular location">
    <subcellularLocation>
        <location evidence="1">Cytoplasm</location>
    </subcellularLocation>
</comment>
<comment type="similarity">
    <text evidence="1">Belongs to the type III pantothenate kinase family.</text>
</comment>
<accession>Q0PBB6</accession>
<name>COAX_CAMJE</name>
<gene>
    <name evidence="1" type="primary">coaX</name>
    <name type="ordered locus">Cj0394c</name>
</gene>
<organism>
    <name type="scientific">Campylobacter jejuni subsp. jejuni serotype O:2 (strain ATCC 700819 / NCTC 11168)</name>
    <dbReference type="NCBI Taxonomy" id="192222"/>
    <lineage>
        <taxon>Bacteria</taxon>
        <taxon>Pseudomonadati</taxon>
        <taxon>Campylobacterota</taxon>
        <taxon>Epsilonproteobacteria</taxon>
        <taxon>Campylobacterales</taxon>
        <taxon>Campylobacteraceae</taxon>
        <taxon>Campylobacter</taxon>
    </lineage>
</organism>
<evidence type="ECO:0000255" key="1">
    <source>
        <dbReference type="HAMAP-Rule" id="MF_01274"/>
    </source>
</evidence>
<evidence type="ECO:0007829" key="2">
    <source>
        <dbReference type="PDB" id="2NRH"/>
    </source>
</evidence>
<proteinExistence type="evidence at protein level"/>
<reference key="1">
    <citation type="journal article" date="2000" name="Nature">
        <title>The genome sequence of the food-borne pathogen Campylobacter jejuni reveals hypervariable sequences.</title>
        <authorList>
            <person name="Parkhill J."/>
            <person name="Wren B.W."/>
            <person name="Mungall K.L."/>
            <person name="Ketley J.M."/>
            <person name="Churcher C.M."/>
            <person name="Basham D."/>
            <person name="Chillingworth T."/>
            <person name="Davies R.M."/>
            <person name="Feltwell T."/>
            <person name="Holroyd S."/>
            <person name="Jagels K."/>
            <person name="Karlyshev A.V."/>
            <person name="Moule S."/>
            <person name="Pallen M.J."/>
            <person name="Penn C.W."/>
            <person name="Quail M.A."/>
            <person name="Rajandream M.A."/>
            <person name="Rutherford K.M."/>
            <person name="van Vliet A.H.M."/>
            <person name="Whitehead S."/>
            <person name="Barrell B.G."/>
        </authorList>
    </citation>
    <scope>NUCLEOTIDE SEQUENCE [LARGE SCALE GENOMIC DNA]</scope>
    <source>
        <strain>ATCC 700819 / NCTC 11168</strain>
    </source>
</reference>